<feature type="chain" id="PRO_0000109336" description="Probable enoyl-CoA hydratase echA8">
    <location>
        <begin position="1"/>
        <end position="257"/>
    </location>
</feature>
<keyword id="KW-0276">Fatty acid metabolism</keyword>
<keyword id="KW-0443">Lipid metabolism</keyword>
<keyword id="KW-0456">Lyase</keyword>
<keyword id="KW-1185">Reference proteome</keyword>
<proteinExistence type="inferred from homology"/>
<organism>
    <name type="scientific">Mycobacterium bovis (strain ATCC BAA-935 / AF2122/97)</name>
    <dbReference type="NCBI Taxonomy" id="233413"/>
    <lineage>
        <taxon>Bacteria</taxon>
        <taxon>Bacillati</taxon>
        <taxon>Actinomycetota</taxon>
        <taxon>Actinomycetes</taxon>
        <taxon>Mycobacteriales</taxon>
        <taxon>Mycobacteriaceae</taxon>
        <taxon>Mycobacterium</taxon>
        <taxon>Mycobacterium tuberculosis complex</taxon>
    </lineage>
</organism>
<comment type="function">
    <text evidence="1">Could possibly oxidize fatty acids using specific components.</text>
</comment>
<comment type="catalytic activity">
    <reaction>
        <text>a (3S)-3-hydroxyacyl-CoA = a (2E)-enoyl-CoA + H2O</text>
        <dbReference type="Rhea" id="RHEA:16105"/>
        <dbReference type="ChEBI" id="CHEBI:15377"/>
        <dbReference type="ChEBI" id="CHEBI:57318"/>
        <dbReference type="ChEBI" id="CHEBI:58856"/>
        <dbReference type="EC" id="4.2.1.17"/>
    </reaction>
</comment>
<comment type="catalytic activity">
    <reaction>
        <text>a 4-saturated-(3S)-3-hydroxyacyl-CoA = a (3E)-enoyl-CoA + H2O</text>
        <dbReference type="Rhea" id="RHEA:20724"/>
        <dbReference type="ChEBI" id="CHEBI:15377"/>
        <dbReference type="ChEBI" id="CHEBI:58521"/>
        <dbReference type="ChEBI" id="CHEBI:137480"/>
        <dbReference type="EC" id="4.2.1.17"/>
    </reaction>
</comment>
<comment type="similarity">
    <text evidence="2">Belongs to the enoyl-CoA hydratase/isomerase family.</text>
</comment>
<sequence>MTYETILVERDQRVGIITLNRPQALNALNSQVMNEVTSAATELDDDPDIGAIIITGSAKAFAAGADIKEMADLTFADAFTADFFATWGKLAAVRTPTIAAVAGYALGGGCELAMMCDVLIAADTAKFGQPEIKLGVLPGMGGSQRLTRAIGKAKAMDLILTGRTMDAAEAERSGLVSRVVPADDLLTEARATATTISQMSASAARMAKEAVNRAFESSLSEGLLYERRLFHSAFATEDQSEGMAAFIEKRAPQFTHR</sequence>
<evidence type="ECO:0000250" key="1"/>
<evidence type="ECO:0000305" key="2"/>
<reference key="1">
    <citation type="journal article" date="2003" name="Proc. Natl. Acad. Sci. U.S.A.">
        <title>The complete genome sequence of Mycobacterium bovis.</title>
        <authorList>
            <person name="Garnier T."/>
            <person name="Eiglmeier K."/>
            <person name="Camus J.-C."/>
            <person name="Medina N."/>
            <person name="Mansoor H."/>
            <person name="Pryor M."/>
            <person name="Duthoy S."/>
            <person name="Grondin S."/>
            <person name="Lacroix C."/>
            <person name="Monsempe C."/>
            <person name="Simon S."/>
            <person name="Harris B."/>
            <person name="Atkin R."/>
            <person name="Doggett J."/>
            <person name="Mayes R."/>
            <person name="Keating L."/>
            <person name="Wheeler P.R."/>
            <person name="Parkhill J."/>
            <person name="Barrell B.G."/>
            <person name="Cole S.T."/>
            <person name="Gordon S.V."/>
            <person name="Hewinson R.G."/>
        </authorList>
    </citation>
    <scope>NUCLEOTIDE SEQUENCE [LARGE SCALE GENOMIC DNA]</scope>
    <source>
        <strain>ATCC BAA-935 / AF2122/97</strain>
    </source>
</reference>
<reference key="2">
    <citation type="journal article" date="2017" name="Genome Announc.">
        <title>Updated reference genome sequence and annotation of Mycobacterium bovis AF2122/97.</title>
        <authorList>
            <person name="Malone K.M."/>
            <person name="Farrell D."/>
            <person name="Stuber T.P."/>
            <person name="Schubert O.T."/>
            <person name="Aebersold R."/>
            <person name="Robbe-Austerman S."/>
            <person name="Gordon S.V."/>
        </authorList>
    </citation>
    <scope>NUCLEOTIDE SEQUENCE [LARGE SCALE GENOMIC DNA]</scope>
    <scope>GENOME REANNOTATION</scope>
    <source>
        <strain>ATCC BAA-935 / AF2122/97</strain>
    </source>
</reference>
<gene>
    <name type="primary">echA8</name>
    <name type="ordered locus">BQ2027_MB1099C</name>
</gene>
<accession>P64017</accession>
<accession>A0A1R3XX88</accession>
<accession>O53418</accession>
<accession>X2BGZ4</accession>
<dbReference type="EC" id="4.2.1.17"/>
<dbReference type="EMBL" id="LT708304">
    <property type="protein sequence ID" value="SIT99698.1"/>
    <property type="molecule type" value="Genomic_DNA"/>
</dbReference>
<dbReference type="RefSeq" id="NP_854754.1">
    <property type="nucleotide sequence ID" value="NC_002945.3"/>
</dbReference>
<dbReference type="RefSeq" id="WP_003405712.1">
    <property type="nucleotide sequence ID" value="NC_002945.4"/>
</dbReference>
<dbReference type="SMR" id="P64017"/>
<dbReference type="KEGG" id="mbo:BQ2027_MB1099C"/>
<dbReference type="PATRIC" id="fig|233413.5.peg.1199"/>
<dbReference type="Proteomes" id="UP000001419">
    <property type="component" value="Chromosome"/>
</dbReference>
<dbReference type="GO" id="GO:0004300">
    <property type="term" value="F:enoyl-CoA hydratase activity"/>
    <property type="evidence" value="ECO:0007669"/>
    <property type="project" value="UniProtKB-EC"/>
</dbReference>
<dbReference type="GO" id="GO:0006635">
    <property type="term" value="P:fatty acid beta-oxidation"/>
    <property type="evidence" value="ECO:0007669"/>
    <property type="project" value="TreeGrafter"/>
</dbReference>
<dbReference type="CDD" id="cd06558">
    <property type="entry name" value="crotonase-like"/>
    <property type="match status" value="1"/>
</dbReference>
<dbReference type="FunFam" id="3.90.226.10:FF:000019">
    <property type="entry name" value="Enoyl-CoA hydratase, mitochondrial"/>
    <property type="match status" value="1"/>
</dbReference>
<dbReference type="FunFam" id="1.10.12.10:FF:000001">
    <property type="entry name" value="Probable enoyl-CoA hydratase, mitochondrial"/>
    <property type="match status" value="1"/>
</dbReference>
<dbReference type="Gene3D" id="3.90.226.10">
    <property type="entry name" value="2-enoyl-CoA Hydratase, Chain A, domain 1"/>
    <property type="match status" value="1"/>
</dbReference>
<dbReference type="Gene3D" id="1.10.12.10">
    <property type="entry name" value="Lyase 2-enoyl-coa Hydratase, Chain A, domain 2"/>
    <property type="match status" value="1"/>
</dbReference>
<dbReference type="InterPro" id="IPR029045">
    <property type="entry name" value="ClpP/crotonase-like_dom_sf"/>
</dbReference>
<dbReference type="InterPro" id="IPR018376">
    <property type="entry name" value="Enoyl-CoA_hyd/isom_CS"/>
</dbReference>
<dbReference type="InterPro" id="IPR001753">
    <property type="entry name" value="Enoyl-CoA_hydra/iso"/>
</dbReference>
<dbReference type="InterPro" id="IPR014748">
    <property type="entry name" value="Enoyl-CoA_hydra_C"/>
</dbReference>
<dbReference type="NCBIfam" id="NF004517">
    <property type="entry name" value="PRK05862.1"/>
    <property type="match status" value="1"/>
</dbReference>
<dbReference type="PANTHER" id="PTHR11941:SF54">
    <property type="entry name" value="ENOYL-COA HYDRATASE, MITOCHONDRIAL"/>
    <property type="match status" value="1"/>
</dbReference>
<dbReference type="PANTHER" id="PTHR11941">
    <property type="entry name" value="ENOYL-COA HYDRATASE-RELATED"/>
    <property type="match status" value="1"/>
</dbReference>
<dbReference type="Pfam" id="PF00378">
    <property type="entry name" value="ECH_1"/>
    <property type="match status" value="1"/>
</dbReference>
<dbReference type="SUPFAM" id="SSF52096">
    <property type="entry name" value="ClpP/crotonase"/>
    <property type="match status" value="1"/>
</dbReference>
<dbReference type="PROSITE" id="PS00166">
    <property type="entry name" value="ENOYL_COA_HYDRATASE"/>
    <property type="match status" value="1"/>
</dbReference>
<name>ECHA8_MYCBO</name>
<protein>
    <recommendedName>
        <fullName>Probable enoyl-CoA hydratase echA8</fullName>
        <ecNumber>4.2.1.17</ecNumber>
    </recommendedName>
</protein>